<name>ANS4B_HUMAN</name>
<gene>
    <name evidence="10" type="primary">ANKS4B</name>
    <name evidence="8" type="synonym">HARP</name>
</gene>
<evidence type="ECO:0000250" key="1">
    <source>
        <dbReference type="UniProtKB" id="Q8K3X6"/>
    </source>
</evidence>
<evidence type="ECO:0000255" key="2"/>
<evidence type="ECO:0000256" key="3">
    <source>
        <dbReference type="SAM" id="MobiDB-lite"/>
    </source>
</evidence>
<evidence type="ECO:0000269" key="4">
    <source>
    </source>
</evidence>
<evidence type="ECO:0000269" key="5">
    <source>
    </source>
</evidence>
<evidence type="ECO:0000269" key="6">
    <source>
    </source>
</evidence>
<evidence type="ECO:0000269" key="7">
    <source>
    </source>
</evidence>
<evidence type="ECO:0000303" key="8">
    <source>
    </source>
</evidence>
<evidence type="ECO:0000305" key="9"/>
<evidence type="ECO:0000312" key="10">
    <source>
        <dbReference type="HGNC" id="HGNC:26795"/>
    </source>
</evidence>
<evidence type="ECO:0007744" key="11">
    <source>
    </source>
</evidence>
<protein>
    <recommendedName>
        <fullName evidence="9">Ankyrin repeat and SAM domain-containing protein 4B</fullName>
    </recommendedName>
    <alternativeName>
        <fullName evidence="8">Harmonin-interacting ankyrin repeat-containing protein</fullName>
        <shortName evidence="8">Harp</shortName>
    </alternativeName>
</protein>
<reference key="1">
    <citation type="journal article" date="2004" name="Nat. Genet.">
        <title>Complete sequencing and characterization of 21,243 full-length human cDNAs.</title>
        <authorList>
            <person name="Ota T."/>
            <person name="Suzuki Y."/>
            <person name="Nishikawa T."/>
            <person name="Otsuki T."/>
            <person name="Sugiyama T."/>
            <person name="Irie R."/>
            <person name="Wakamatsu A."/>
            <person name="Hayashi K."/>
            <person name="Sato H."/>
            <person name="Nagai K."/>
            <person name="Kimura K."/>
            <person name="Makita H."/>
            <person name="Sekine M."/>
            <person name="Obayashi M."/>
            <person name="Nishi T."/>
            <person name="Shibahara T."/>
            <person name="Tanaka T."/>
            <person name="Ishii S."/>
            <person name="Yamamoto J."/>
            <person name="Saito K."/>
            <person name="Kawai Y."/>
            <person name="Isono Y."/>
            <person name="Nakamura Y."/>
            <person name="Nagahari K."/>
            <person name="Murakami K."/>
            <person name="Yasuda T."/>
            <person name="Iwayanagi T."/>
            <person name="Wagatsuma M."/>
            <person name="Shiratori A."/>
            <person name="Sudo H."/>
            <person name="Hosoiri T."/>
            <person name="Kaku Y."/>
            <person name="Kodaira H."/>
            <person name="Kondo H."/>
            <person name="Sugawara M."/>
            <person name="Takahashi M."/>
            <person name="Kanda K."/>
            <person name="Yokoi T."/>
            <person name="Furuya T."/>
            <person name="Kikkawa E."/>
            <person name="Omura Y."/>
            <person name="Abe K."/>
            <person name="Kamihara K."/>
            <person name="Katsuta N."/>
            <person name="Sato K."/>
            <person name="Tanikawa M."/>
            <person name="Yamazaki M."/>
            <person name="Ninomiya K."/>
            <person name="Ishibashi T."/>
            <person name="Yamashita H."/>
            <person name="Murakawa K."/>
            <person name="Fujimori K."/>
            <person name="Tanai H."/>
            <person name="Kimata M."/>
            <person name="Watanabe M."/>
            <person name="Hiraoka S."/>
            <person name="Chiba Y."/>
            <person name="Ishida S."/>
            <person name="Ono Y."/>
            <person name="Takiguchi S."/>
            <person name="Watanabe S."/>
            <person name="Yosida M."/>
            <person name="Hotuta T."/>
            <person name="Kusano J."/>
            <person name="Kanehori K."/>
            <person name="Takahashi-Fujii A."/>
            <person name="Hara H."/>
            <person name="Tanase T.-O."/>
            <person name="Nomura Y."/>
            <person name="Togiya S."/>
            <person name="Komai F."/>
            <person name="Hara R."/>
            <person name="Takeuchi K."/>
            <person name="Arita M."/>
            <person name="Imose N."/>
            <person name="Musashino K."/>
            <person name="Yuuki H."/>
            <person name="Oshima A."/>
            <person name="Sasaki N."/>
            <person name="Aotsuka S."/>
            <person name="Yoshikawa Y."/>
            <person name="Matsunawa H."/>
            <person name="Ichihara T."/>
            <person name="Shiohata N."/>
            <person name="Sano S."/>
            <person name="Moriya S."/>
            <person name="Momiyama H."/>
            <person name="Satoh N."/>
            <person name="Takami S."/>
            <person name="Terashima Y."/>
            <person name="Suzuki O."/>
            <person name="Nakagawa S."/>
            <person name="Senoh A."/>
            <person name="Mizoguchi H."/>
            <person name="Goto Y."/>
            <person name="Shimizu F."/>
            <person name="Wakebe H."/>
            <person name="Hishigaki H."/>
            <person name="Watanabe T."/>
            <person name="Sugiyama A."/>
            <person name="Takemoto M."/>
            <person name="Kawakami B."/>
            <person name="Yamazaki M."/>
            <person name="Watanabe K."/>
            <person name="Kumagai A."/>
            <person name="Itakura S."/>
            <person name="Fukuzumi Y."/>
            <person name="Fujimori Y."/>
            <person name="Komiyama M."/>
            <person name="Tashiro H."/>
            <person name="Tanigami A."/>
            <person name="Fujiwara T."/>
            <person name="Ono T."/>
            <person name="Yamada K."/>
            <person name="Fujii Y."/>
            <person name="Ozaki K."/>
            <person name="Hirao M."/>
            <person name="Ohmori Y."/>
            <person name="Kawabata A."/>
            <person name="Hikiji T."/>
            <person name="Kobatake N."/>
            <person name="Inagaki H."/>
            <person name="Ikema Y."/>
            <person name="Okamoto S."/>
            <person name="Okitani R."/>
            <person name="Kawakami T."/>
            <person name="Noguchi S."/>
            <person name="Itoh T."/>
            <person name="Shigeta K."/>
            <person name="Senba T."/>
            <person name="Matsumura K."/>
            <person name="Nakajima Y."/>
            <person name="Mizuno T."/>
            <person name="Morinaga M."/>
            <person name="Sasaki M."/>
            <person name="Togashi T."/>
            <person name="Oyama M."/>
            <person name="Hata H."/>
            <person name="Watanabe M."/>
            <person name="Komatsu T."/>
            <person name="Mizushima-Sugano J."/>
            <person name="Satoh T."/>
            <person name="Shirai Y."/>
            <person name="Takahashi Y."/>
            <person name="Nakagawa K."/>
            <person name="Okumura K."/>
            <person name="Nagase T."/>
            <person name="Nomura N."/>
            <person name="Kikuchi H."/>
            <person name="Masuho Y."/>
            <person name="Yamashita R."/>
            <person name="Nakai K."/>
            <person name="Yada T."/>
            <person name="Nakamura Y."/>
            <person name="Ohara O."/>
            <person name="Isogai T."/>
            <person name="Sugano S."/>
        </authorList>
    </citation>
    <scope>NUCLEOTIDE SEQUENCE [LARGE SCALE MRNA]</scope>
    <source>
        <tissue>Liver</tissue>
    </source>
</reference>
<reference key="2">
    <citation type="journal article" date="2004" name="Nature">
        <title>The sequence and analysis of duplication-rich human chromosome 16.</title>
        <authorList>
            <person name="Martin J."/>
            <person name="Han C."/>
            <person name="Gordon L.A."/>
            <person name="Terry A."/>
            <person name="Prabhakar S."/>
            <person name="She X."/>
            <person name="Xie G."/>
            <person name="Hellsten U."/>
            <person name="Chan Y.M."/>
            <person name="Altherr M."/>
            <person name="Couronne O."/>
            <person name="Aerts A."/>
            <person name="Bajorek E."/>
            <person name="Black S."/>
            <person name="Blumer H."/>
            <person name="Branscomb E."/>
            <person name="Brown N.C."/>
            <person name="Bruno W.J."/>
            <person name="Buckingham J.M."/>
            <person name="Callen D.F."/>
            <person name="Campbell C.S."/>
            <person name="Campbell M.L."/>
            <person name="Campbell E.W."/>
            <person name="Caoile C."/>
            <person name="Challacombe J.F."/>
            <person name="Chasteen L.A."/>
            <person name="Chertkov O."/>
            <person name="Chi H.C."/>
            <person name="Christensen M."/>
            <person name="Clark L.M."/>
            <person name="Cohn J.D."/>
            <person name="Denys M."/>
            <person name="Detter J.C."/>
            <person name="Dickson M."/>
            <person name="Dimitrijevic-Bussod M."/>
            <person name="Escobar J."/>
            <person name="Fawcett J.J."/>
            <person name="Flowers D."/>
            <person name="Fotopulos D."/>
            <person name="Glavina T."/>
            <person name="Gomez M."/>
            <person name="Gonzales E."/>
            <person name="Goodstein D."/>
            <person name="Goodwin L.A."/>
            <person name="Grady D.L."/>
            <person name="Grigoriev I."/>
            <person name="Groza M."/>
            <person name="Hammon N."/>
            <person name="Hawkins T."/>
            <person name="Haydu L."/>
            <person name="Hildebrand C.E."/>
            <person name="Huang W."/>
            <person name="Israni S."/>
            <person name="Jett J."/>
            <person name="Jewett P.B."/>
            <person name="Kadner K."/>
            <person name="Kimball H."/>
            <person name="Kobayashi A."/>
            <person name="Krawczyk M.-C."/>
            <person name="Leyba T."/>
            <person name="Longmire J.L."/>
            <person name="Lopez F."/>
            <person name="Lou Y."/>
            <person name="Lowry S."/>
            <person name="Ludeman T."/>
            <person name="Manohar C.F."/>
            <person name="Mark G.A."/>
            <person name="McMurray K.L."/>
            <person name="Meincke L.J."/>
            <person name="Morgan J."/>
            <person name="Moyzis R.K."/>
            <person name="Mundt M.O."/>
            <person name="Munk A.C."/>
            <person name="Nandkeshwar R.D."/>
            <person name="Pitluck S."/>
            <person name="Pollard M."/>
            <person name="Predki P."/>
            <person name="Parson-Quintana B."/>
            <person name="Ramirez L."/>
            <person name="Rash S."/>
            <person name="Retterer J."/>
            <person name="Ricke D.O."/>
            <person name="Robinson D.L."/>
            <person name="Rodriguez A."/>
            <person name="Salamov A."/>
            <person name="Saunders E.H."/>
            <person name="Scott D."/>
            <person name="Shough T."/>
            <person name="Stallings R.L."/>
            <person name="Stalvey M."/>
            <person name="Sutherland R.D."/>
            <person name="Tapia R."/>
            <person name="Tesmer J.G."/>
            <person name="Thayer N."/>
            <person name="Thompson L.S."/>
            <person name="Tice H."/>
            <person name="Torney D.C."/>
            <person name="Tran-Gyamfi M."/>
            <person name="Tsai M."/>
            <person name="Ulanovsky L.E."/>
            <person name="Ustaszewska A."/>
            <person name="Vo N."/>
            <person name="White P.S."/>
            <person name="Williams A.L."/>
            <person name="Wills P.L."/>
            <person name="Wu J.-R."/>
            <person name="Wu K."/>
            <person name="Yang J."/>
            <person name="DeJong P."/>
            <person name="Bruce D."/>
            <person name="Doggett N.A."/>
            <person name="Deaven L."/>
            <person name="Schmutz J."/>
            <person name="Grimwood J."/>
            <person name="Richardson P."/>
            <person name="Rokhsar D.S."/>
            <person name="Eichler E.E."/>
            <person name="Gilna P."/>
            <person name="Lucas S.M."/>
            <person name="Myers R.M."/>
            <person name="Rubin E.M."/>
            <person name="Pennacchio L.A."/>
        </authorList>
    </citation>
    <scope>NUCLEOTIDE SEQUENCE [LARGE SCALE GENOMIC DNA]</scope>
</reference>
<reference key="3">
    <citation type="journal article" date="2004" name="Genome Res.">
        <title>The status, quality, and expansion of the NIH full-length cDNA project: the Mammalian Gene Collection (MGC).</title>
        <authorList>
            <consortium name="The MGC Project Team"/>
        </authorList>
    </citation>
    <scope>NUCLEOTIDE SEQUENCE [LARGE SCALE MRNA]</scope>
</reference>
<reference key="4">
    <citation type="journal article" date="2003" name="Hum. Mol. Genet.">
        <title>Usher syndrome type I G (USH1G) is caused by mutations in the gene encoding SANS, a protein that associates with the USH1C protein, harmonin.</title>
        <authorList>
            <person name="Weil D."/>
            <person name="El-Amraoui A."/>
            <person name="Masmoudi S."/>
            <person name="Mustapha M."/>
            <person name="Kikkawa Y."/>
            <person name="Laine S."/>
            <person name="Delmaghani S."/>
            <person name="Adato A."/>
            <person name="Nadifi S."/>
            <person name="Zina Z.B."/>
            <person name="Hamel C."/>
            <person name="Gal A."/>
            <person name="Ayadi H."/>
            <person name="Yonekawa H."/>
            <person name="Petit C."/>
        </authorList>
    </citation>
    <scope>TISSUE SPECIFICITY</scope>
</reference>
<reference key="5">
    <citation type="journal article" date="2014" name="J. Proteomics">
        <title>An enzyme assisted RP-RPLC approach for in-depth analysis of human liver phosphoproteome.</title>
        <authorList>
            <person name="Bian Y."/>
            <person name="Song C."/>
            <person name="Cheng K."/>
            <person name="Dong M."/>
            <person name="Wang F."/>
            <person name="Huang J."/>
            <person name="Sun D."/>
            <person name="Wang L."/>
            <person name="Ye M."/>
            <person name="Zou H."/>
        </authorList>
    </citation>
    <scope>PHOSPHORYLATION [LARGE SCALE ANALYSIS] AT SER-283</scope>
    <scope>IDENTIFICATION BY MASS SPECTROMETRY [LARGE SCALE ANALYSIS]</scope>
    <source>
        <tissue>Liver</tissue>
    </source>
</reference>
<reference key="6">
    <citation type="journal article" date="2016" name="Dev. Cell">
        <title>Mechanistic basis of organization of the Harmonin/USH1C-mediated brush border microvilli tip-link complex.</title>
        <authorList>
            <person name="Li J."/>
            <person name="He Y."/>
            <person name="Lu Q."/>
            <person name="Zhang M."/>
        </authorList>
    </citation>
    <scope>INTERACTION WITH USH1C</scope>
</reference>
<reference key="7">
    <citation type="journal article" date="2016" name="Dev. Cell">
        <title>ANKS4B is essential for intermicrovillar adhesion complex formation.</title>
        <authorList>
            <person name="Crawley S.W."/>
            <person name="Weck M.L."/>
            <person name="Grega-Larson N.E."/>
            <person name="Shifrin D.A. Jr."/>
            <person name="Tyska M.J."/>
        </authorList>
    </citation>
    <scope>FUNCTION</scope>
    <scope>INTERACTION WITH MYO7B AND USH1C</scope>
    <scope>IDENTIFICATION OF THE IMAC COMPLEX</scope>
    <scope>SUBCELLULAR LOCATION</scope>
    <scope>REGION</scope>
    <scope>MOTIF</scope>
    <scope>MUTAGENESIS OF LEU-48 AND LEU-417</scope>
</reference>
<reference key="8">
    <citation type="journal article" date="2020" name="J. Biol. Chem.">
        <title>The small EF-hand protein CALML4 functions as a critical myosin light chain within the intermicrovillar adhesion complex.</title>
        <authorList>
            <person name="Choi M.S."/>
            <person name="Graves M.J."/>
            <person name="Matoo S."/>
            <person name="Storad Z.A."/>
            <person name="El Sheikh Idris R.A."/>
            <person name="Weck M.L."/>
            <person name="Smith Z.B."/>
            <person name="Tyska M.J."/>
            <person name="Crawley S.W."/>
        </authorList>
    </citation>
    <scope>IDENTIFICATION OF THE IMAC COMPLEX</scope>
    <scope>SUBCELLULAR LOCATION</scope>
</reference>
<sequence>MSTRYHQAASDSYLELLKEATKRDLNLSDEDGMTPTLLAAYHGNLEALEIICSRGGDPDRCDIWGNTPLHFAASNGHAHCVSFLVNFGANIFALDNDLQTPLDAAASREQNECVALLDKAATAQNIMNPKKVTRLKEQAQKNARRQIKECERLQEKHQNKMAHTYSKEESGTLSSSKGTFSRSSPSNASAPGTFGSLSKGIKDTFKIKFKKNKDTAEQVGKEGRSGQRNVMEVFREEEEDSFSGDFKEKLQLSAEEDGSVHHESILNRPGLGSIVFRRNRISSPEDISDSKREFGFKLPSELLQRQGASEADEGAADEEGEENGLKDDLPWDDDEVEWEEDVVDATPLEVFLLSQHLEEFLPIFKREQIDLEALLLCSDEDLQSIQMQLGPRKKVLNAINRRKQVLQQPGQLVDTSL</sequence>
<feature type="chain" id="PRO_0000066996" description="Ankyrin repeat and SAM domain-containing protein 4B">
    <location>
        <begin position="1"/>
        <end position="417"/>
    </location>
</feature>
<feature type="repeat" description="ANK 1">
    <location>
        <begin position="31"/>
        <end position="60"/>
    </location>
</feature>
<feature type="repeat" description="ANK 2">
    <location>
        <begin position="64"/>
        <end position="93"/>
    </location>
</feature>
<feature type="repeat" description="ANK 3">
    <location>
        <begin position="97"/>
        <end position="126"/>
    </location>
</feature>
<feature type="domain" description="SAM">
    <location>
        <begin position="351"/>
        <end position="403"/>
    </location>
</feature>
<feature type="region of interest" description="Mediates localization to microvilli" evidence="6">
    <location>
        <begin position="1"/>
        <end position="252"/>
    </location>
</feature>
<feature type="region of interest" description="Disordered" evidence="3">
    <location>
        <begin position="151"/>
        <end position="195"/>
    </location>
</feature>
<feature type="region of interest" description="Mediates interaction with MYO7B" evidence="6">
    <location>
        <begin position="253"/>
        <end position="346"/>
    </location>
</feature>
<feature type="region of interest" description="Disordered" evidence="3">
    <location>
        <begin position="305"/>
        <end position="330"/>
    </location>
</feature>
<feature type="coiled-coil region" evidence="2">
    <location>
        <begin position="130"/>
        <end position="164"/>
    </location>
</feature>
<feature type="short sequence motif" description="PDZ-binding; mediates interaction with USH1C" evidence="6">
    <location>
        <begin position="415"/>
        <end position="417"/>
    </location>
</feature>
<feature type="compositionally biased region" description="Polar residues" evidence="3">
    <location>
        <begin position="171"/>
        <end position="190"/>
    </location>
</feature>
<feature type="compositionally biased region" description="Acidic residues" evidence="3">
    <location>
        <begin position="310"/>
        <end position="322"/>
    </location>
</feature>
<feature type="modified residue" description="Phosphoserine" evidence="11">
    <location>
        <position position="283"/>
    </location>
</feature>
<feature type="mutagenesis site" description="Decreased localization to microvilli." evidence="6">
    <original>L</original>
    <variation>P</variation>
    <location>
        <position position="48"/>
    </location>
</feature>
<feature type="mutagenesis site" description="Decreased interaction with USH1C." evidence="6">
    <original>L</original>
    <variation>R</variation>
    <location>
        <position position="417"/>
    </location>
</feature>
<dbReference type="EMBL" id="AK096138">
    <property type="protein sequence ID" value="BAC04707.1"/>
    <property type="status" value="ALT_SEQ"/>
    <property type="molecule type" value="mRNA"/>
</dbReference>
<dbReference type="EMBL" id="AF001550">
    <property type="status" value="NOT_ANNOTATED_CDS"/>
    <property type="molecule type" value="Genomic_DNA"/>
</dbReference>
<dbReference type="EMBL" id="BC111784">
    <property type="status" value="NOT_ANNOTATED_CDS"/>
    <property type="molecule type" value="mRNA"/>
</dbReference>
<dbReference type="CCDS" id="CCDS42130.1"/>
<dbReference type="RefSeq" id="NP_665872.2">
    <property type="nucleotide sequence ID" value="NM_145865.3"/>
</dbReference>
<dbReference type="SMR" id="Q8N8V4"/>
<dbReference type="BioGRID" id="129220">
    <property type="interactions" value="11"/>
</dbReference>
<dbReference type="FunCoup" id="Q8N8V4">
    <property type="interactions" value="12"/>
</dbReference>
<dbReference type="IntAct" id="Q8N8V4">
    <property type="interactions" value="6"/>
</dbReference>
<dbReference type="STRING" id="9606.ENSP00000308772"/>
<dbReference type="GlyGen" id="Q8N8V4">
    <property type="glycosylation" value="1 site, 1 O-linked glycan (1 site)"/>
</dbReference>
<dbReference type="iPTMnet" id="Q8N8V4"/>
<dbReference type="PhosphoSitePlus" id="Q8N8V4"/>
<dbReference type="BioMuta" id="ANKS4B"/>
<dbReference type="DMDM" id="317373324"/>
<dbReference type="jPOST" id="Q8N8V4"/>
<dbReference type="MassIVE" id="Q8N8V4"/>
<dbReference type="PaxDb" id="9606-ENSP00000308772"/>
<dbReference type="PeptideAtlas" id="Q8N8V4"/>
<dbReference type="ProteomicsDB" id="72464"/>
<dbReference type="Antibodypedia" id="50456">
    <property type="antibodies" value="67 antibodies from 15 providers"/>
</dbReference>
<dbReference type="DNASU" id="257629"/>
<dbReference type="Ensembl" id="ENST00000311620.7">
    <property type="protein sequence ID" value="ENSP00000308772.5"/>
    <property type="gene ID" value="ENSG00000175311.7"/>
</dbReference>
<dbReference type="Ensembl" id="ENST00000639229.2">
    <property type="protein sequence ID" value="ENSP00000491748.1"/>
    <property type="gene ID" value="ENSG00000284290.2"/>
</dbReference>
<dbReference type="GeneID" id="257629"/>
<dbReference type="KEGG" id="hsa:257629"/>
<dbReference type="MANE-Select" id="ENST00000311620.7">
    <property type="protein sequence ID" value="ENSP00000308772.5"/>
    <property type="RefSeq nucleotide sequence ID" value="NM_145865.3"/>
    <property type="RefSeq protein sequence ID" value="NP_665872.2"/>
</dbReference>
<dbReference type="UCSC" id="uc010bwp.2">
    <property type="organism name" value="human"/>
</dbReference>
<dbReference type="AGR" id="HGNC:26795"/>
<dbReference type="CTD" id="257629"/>
<dbReference type="DisGeNET" id="257629"/>
<dbReference type="GeneCards" id="ANKS4B"/>
<dbReference type="HGNC" id="HGNC:26795">
    <property type="gene designation" value="ANKS4B"/>
</dbReference>
<dbReference type="HPA" id="ENSG00000175311">
    <property type="expression patterns" value="Group enriched (intestine, kidney, liver)"/>
</dbReference>
<dbReference type="MIM" id="609901">
    <property type="type" value="gene"/>
</dbReference>
<dbReference type="neXtProt" id="NX_Q8N8V4"/>
<dbReference type="OpenTargets" id="ENSG00000175311"/>
<dbReference type="PharmGKB" id="PA143485304"/>
<dbReference type="VEuPathDB" id="HostDB:ENSG00000175311"/>
<dbReference type="eggNOG" id="KOG0504">
    <property type="taxonomic scope" value="Eukaryota"/>
</dbReference>
<dbReference type="GeneTree" id="ENSGT00390000017548"/>
<dbReference type="HOGENOM" id="CLU_028071_1_0_1"/>
<dbReference type="InParanoid" id="Q8N8V4"/>
<dbReference type="OMA" id="SHGHMEI"/>
<dbReference type="OrthoDB" id="76949at2759"/>
<dbReference type="PAN-GO" id="Q8N8V4">
    <property type="GO annotations" value="0 GO annotations based on evolutionary models"/>
</dbReference>
<dbReference type="PhylomeDB" id="Q8N8V4"/>
<dbReference type="TreeFam" id="TF324946"/>
<dbReference type="PathwayCommons" id="Q8N8V4"/>
<dbReference type="SignaLink" id="Q8N8V4"/>
<dbReference type="SIGNOR" id="Q8N8V4"/>
<dbReference type="BioGRID-ORCS" id="257629">
    <property type="hits" value="6 hits in 1138 CRISPR screens"/>
</dbReference>
<dbReference type="GenomeRNAi" id="257629"/>
<dbReference type="Pharos" id="Q8N8V4">
    <property type="development level" value="Tbio"/>
</dbReference>
<dbReference type="PRO" id="PR:Q8N8V4"/>
<dbReference type="Proteomes" id="UP000005640">
    <property type="component" value="Chromosome 16"/>
</dbReference>
<dbReference type="RNAct" id="Q8N8V4">
    <property type="molecule type" value="protein"/>
</dbReference>
<dbReference type="Bgee" id="ENSG00000175311">
    <property type="expression patterns" value="Expressed in mucosa of transverse colon and 37 other cell types or tissues"/>
</dbReference>
<dbReference type="GO" id="GO:0005903">
    <property type="term" value="C:brush border"/>
    <property type="evidence" value="ECO:0000314"/>
    <property type="project" value="UniProtKB"/>
</dbReference>
<dbReference type="GO" id="GO:0005789">
    <property type="term" value="C:endoplasmic reticulum membrane"/>
    <property type="evidence" value="ECO:0000250"/>
    <property type="project" value="UniProtKB"/>
</dbReference>
<dbReference type="GO" id="GO:0005902">
    <property type="term" value="C:microvillus"/>
    <property type="evidence" value="ECO:0000314"/>
    <property type="project" value="UniProtKB"/>
</dbReference>
<dbReference type="GO" id="GO:0005886">
    <property type="term" value="C:plasma membrane"/>
    <property type="evidence" value="ECO:0007669"/>
    <property type="project" value="Ensembl"/>
</dbReference>
<dbReference type="GO" id="GO:1904970">
    <property type="term" value="P:brush border assembly"/>
    <property type="evidence" value="ECO:0000314"/>
    <property type="project" value="UniProtKB"/>
</dbReference>
<dbReference type="GO" id="GO:0030154">
    <property type="term" value="P:cell differentiation"/>
    <property type="evidence" value="ECO:0007669"/>
    <property type="project" value="UniProtKB-KW"/>
</dbReference>
<dbReference type="GO" id="GO:1904106">
    <property type="term" value="P:protein localization to microvillus"/>
    <property type="evidence" value="ECO:0000315"/>
    <property type="project" value="UniProtKB"/>
</dbReference>
<dbReference type="GO" id="GO:0065003">
    <property type="term" value="P:protein-containing complex assembly"/>
    <property type="evidence" value="ECO:0000315"/>
    <property type="project" value="UniProtKB"/>
</dbReference>
<dbReference type="GO" id="GO:0034976">
    <property type="term" value="P:response to endoplasmic reticulum stress"/>
    <property type="evidence" value="ECO:0000250"/>
    <property type="project" value="UniProtKB"/>
</dbReference>
<dbReference type="CDD" id="cd21802">
    <property type="entry name" value="CEN_ANKS4B"/>
    <property type="match status" value="1"/>
</dbReference>
<dbReference type="CDD" id="cd09587">
    <property type="entry name" value="SAM_HARP"/>
    <property type="match status" value="1"/>
</dbReference>
<dbReference type="FunFam" id="1.10.150.50:FF:000034">
    <property type="entry name" value="ankyrin repeat and SAM domain-containing protein 4B"/>
    <property type="match status" value="1"/>
</dbReference>
<dbReference type="FunFam" id="1.25.40.20:FF:000074">
    <property type="entry name" value="Usher syndrome type-1G protein isoform X1"/>
    <property type="match status" value="1"/>
</dbReference>
<dbReference type="Gene3D" id="1.25.40.20">
    <property type="entry name" value="Ankyrin repeat-containing domain"/>
    <property type="match status" value="1"/>
</dbReference>
<dbReference type="Gene3D" id="1.10.150.50">
    <property type="entry name" value="Transcription Factor, Ets-1"/>
    <property type="match status" value="1"/>
</dbReference>
<dbReference type="InterPro" id="IPR037601">
    <property type="entry name" value="ANKS4B_SAM"/>
</dbReference>
<dbReference type="InterPro" id="IPR002110">
    <property type="entry name" value="Ankyrin_rpt"/>
</dbReference>
<dbReference type="InterPro" id="IPR036770">
    <property type="entry name" value="Ankyrin_rpt-contain_sf"/>
</dbReference>
<dbReference type="InterPro" id="IPR001660">
    <property type="entry name" value="SAM"/>
</dbReference>
<dbReference type="InterPro" id="IPR013761">
    <property type="entry name" value="SAM/pointed_sf"/>
</dbReference>
<dbReference type="PANTHER" id="PTHR24161">
    <property type="entry name" value="ANK_REP_REGION DOMAIN-CONTAINING PROTEIN-RELATED"/>
    <property type="match status" value="1"/>
</dbReference>
<dbReference type="PANTHER" id="PTHR24161:SF20">
    <property type="entry name" value="ANKYRIN REPEAT AND SAM DOMAIN-CONTAINING PROTEIN 4B"/>
    <property type="match status" value="1"/>
</dbReference>
<dbReference type="Pfam" id="PF12796">
    <property type="entry name" value="Ank_2"/>
    <property type="match status" value="1"/>
</dbReference>
<dbReference type="Pfam" id="PF00536">
    <property type="entry name" value="SAM_1"/>
    <property type="match status" value="1"/>
</dbReference>
<dbReference type="SMART" id="SM00248">
    <property type="entry name" value="ANK"/>
    <property type="match status" value="3"/>
</dbReference>
<dbReference type="SMART" id="SM00454">
    <property type="entry name" value="SAM"/>
    <property type="match status" value="1"/>
</dbReference>
<dbReference type="SUPFAM" id="SSF48403">
    <property type="entry name" value="Ankyrin repeat"/>
    <property type="match status" value="1"/>
</dbReference>
<dbReference type="SUPFAM" id="SSF47769">
    <property type="entry name" value="SAM/Pointed domain"/>
    <property type="match status" value="1"/>
</dbReference>
<dbReference type="PROSITE" id="PS50297">
    <property type="entry name" value="ANK_REP_REGION"/>
    <property type="match status" value="1"/>
</dbReference>
<dbReference type="PROSITE" id="PS50088">
    <property type="entry name" value="ANK_REPEAT"/>
    <property type="match status" value="2"/>
</dbReference>
<keyword id="KW-0040">ANK repeat</keyword>
<keyword id="KW-0966">Cell projection</keyword>
<keyword id="KW-0175">Coiled coil</keyword>
<keyword id="KW-0221">Differentiation</keyword>
<keyword id="KW-0597">Phosphoprotein</keyword>
<keyword id="KW-1267">Proteomics identification</keyword>
<keyword id="KW-1185">Reference proteome</keyword>
<keyword id="KW-0677">Repeat</keyword>
<proteinExistence type="evidence at protein level"/>
<organism>
    <name type="scientific">Homo sapiens</name>
    <name type="common">Human</name>
    <dbReference type="NCBI Taxonomy" id="9606"/>
    <lineage>
        <taxon>Eukaryota</taxon>
        <taxon>Metazoa</taxon>
        <taxon>Chordata</taxon>
        <taxon>Craniata</taxon>
        <taxon>Vertebrata</taxon>
        <taxon>Euteleostomi</taxon>
        <taxon>Mammalia</taxon>
        <taxon>Eutheria</taxon>
        <taxon>Euarchontoglires</taxon>
        <taxon>Primates</taxon>
        <taxon>Haplorrhini</taxon>
        <taxon>Catarrhini</taxon>
        <taxon>Hominidae</taxon>
        <taxon>Homo</taxon>
    </lineage>
</organism>
<comment type="function">
    <text evidence="1 6">As part of the intermicrovillar adhesion complex/IMAC plays a role in epithelial brush border differentiation, controlling microvilli organization and length. Plays a role in assembly of the complex (PubMed:26812018). May play a role in cellular response to endoplasmic reticulum stress (By similarity).</text>
</comment>
<comment type="subunit">
    <text evidence="1 5 6 7">Part of the IMAC/intermicrovillar adhesion complex/intermicrovillar tip-link complex composed of ANKS4B, MYO7B, USH1C, CDHR2 and CDHR5 (PubMed:26812018, PubMed:32209652). Interacts with USH1C; the interaction is direct and is required for ANKS4B localization to the tip of microvilli (PubMed:26812017, PubMed:26812018). Interacts with MYO7B; the interaction is direct (PubMed:26812018). May interact with HSPA5 (By similarity).</text>
</comment>
<comment type="interaction">
    <interactant intactId="EBI-9658517">
        <id>Q8N8V4</id>
    </interactant>
    <interactant intactId="EBI-5323863">
        <id>Q5S007</id>
        <label>LRRK2</label>
    </interactant>
    <organismsDiffer>false</organismsDiffer>
    <experiments>2</experiments>
</comment>
<comment type="interaction">
    <interactant intactId="EBI-9658517">
        <id>Q8N8V4</id>
    </interactant>
    <interactant intactId="EBI-11523636">
        <id>Q9Y6N9-4</id>
        <label>USH1C</label>
    </interactant>
    <organismsDiffer>false</organismsDiffer>
    <experiments>5</experiments>
</comment>
<comment type="subcellular location">
    <subcellularLocation>
        <location evidence="6 7">Cell projection</location>
        <location evidence="6 7">Microvillus</location>
    </subcellularLocation>
    <text evidence="1 6 7">Localizes at the tip of microvilli (PubMed:26812018, PubMed:32209652). May associate with endoplasmic reticulum membranes (By similarity).</text>
</comment>
<comment type="tissue specificity">
    <text evidence="4">Expressed in kidney and small intestine.</text>
</comment>
<comment type="sequence caution" evidence="9">
    <conflict type="erroneous termination">
        <sequence resource="EMBL-CDS" id="BAC04707"/>
    </conflict>
    <text>Extended C-terminus.</text>
</comment>
<accession>Q8N8V4</accession>